<accession>P21614</accession>
<accession>Q7TS97</accession>
<accession>Q91XG1</accession>
<accession>Q9CY31</accession>
<evidence type="ECO:0000250" key="1">
    <source>
        <dbReference type="UniProtKB" id="P02774"/>
    </source>
</evidence>
<evidence type="ECO:0000250" key="2">
    <source>
        <dbReference type="UniProtKB" id="P04276"/>
    </source>
</evidence>
<evidence type="ECO:0000255" key="3">
    <source>
        <dbReference type="PROSITE-ProRule" id="PRU00769"/>
    </source>
</evidence>
<evidence type="ECO:0000269" key="4">
    <source>
    </source>
</evidence>
<evidence type="ECO:0000269" key="5">
    <source>
    </source>
</evidence>
<evidence type="ECO:0000269" key="6">
    <source>
    </source>
</evidence>
<evidence type="ECO:0000305" key="7"/>
<dbReference type="EMBL" id="AK010965">
    <property type="protein sequence ID" value="BAB27297.1"/>
    <property type="molecule type" value="mRNA"/>
</dbReference>
<dbReference type="EMBL" id="BC010762">
    <property type="protein sequence ID" value="AAH10762.1"/>
    <property type="molecule type" value="mRNA"/>
</dbReference>
<dbReference type="EMBL" id="BC051395">
    <property type="protein sequence ID" value="AAH51395.2"/>
    <property type="molecule type" value="mRNA"/>
</dbReference>
<dbReference type="EMBL" id="M55413">
    <property type="protein sequence ID" value="AAA37669.1"/>
    <property type="molecule type" value="mRNA"/>
</dbReference>
<dbReference type="CCDS" id="CCDS19407.1"/>
<dbReference type="PIR" id="A35327">
    <property type="entry name" value="A35327"/>
</dbReference>
<dbReference type="RefSeq" id="NP_032122.1">
    <property type="nucleotide sequence ID" value="NM_008096.2"/>
</dbReference>
<dbReference type="SMR" id="P21614"/>
<dbReference type="BioGRID" id="199850">
    <property type="interactions" value="3"/>
</dbReference>
<dbReference type="FunCoup" id="P21614">
    <property type="interactions" value="175"/>
</dbReference>
<dbReference type="IntAct" id="P21614">
    <property type="interactions" value="1"/>
</dbReference>
<dbReference type="STRING" id="10090.ENSMUSP00000046636"/>
<dbReference type="GlyCosmos" id="P21614">
    <property type="glycosylation" value="1 site, No reported glycans"/>
</dbReference>
<dbReference type="GlyGen" id="P21614">
    <property type="glycosylation" value="3 sites, 1 N-linked glycan (1 site), 1 O-linked glycan (1 site)"/>
</dbReference>
<dbReference type="iPTMnet" id="P21614"/>
<dbReference type="PhosphoSitePlus" id="P21614"/>
<dbReference type="SwissPalm" id="P21614"/>
<dbReference type="REPRODUCTION-2DPAGE" id="P21614"/>
<dbReference type="CPTAC" id="non-CPTAC-3321"/>
<dbReference type="jPOST" id="P21614"/>
<dbReference type="PaxDb" id="10090-ENSMUSP00000046636"/>
<dbReference type="PeptideAtlas" id="P21614"/>
<dbReference type="ProteomicsDB" id="297592"/>
<dbReference type="Antibodypedia" id="871">
    <property type="antibodies" value="815 antibodies from 40 providers"/>
</dbReference>
<dbReference type="DNASU" id="14473"/>
<dbReference type="Ensembl" id="ENSMUST00000049209.13">
    <property type="protein sequence ID" value="ENSMUSP00000046636.9"/>
    <property type="gene ID" value="ENSMUSG00000035540.13"/>
</dbReference>
<dbReference type="GeneID" id="14473"/>
<dbReference type="KEGG" id="mmu:14473"/>
<dbReference type="UCSC" id="uc008yam.2">
    <property type="organism name" value="mouse"/>
</dbReference>
<dbReference type="AGR" id="MGI:95669"/>
<dbReference type="CTD" id="2638"/>
<dbReference type="MGI" id="MGI:95669">
    <property type="gene designation" value="Gc"/>
</dbReference>
<dbReference type="VEuPathDB" id="HostDB:ENSMUSG00000035540"/>
<dbReference type="eggNOG" id="ENOG502QTPW">
    <property type="taxonomic scope" value="Eukaryota"/>
</dbReference>
<dbReference type="GeneTree" id="ENSGT00390000000113"/>
<dbReference type="HOGENOM" id="CLU_045992_0_0_1"/>
<dbReference type="InParanoid" id="P21614"/>
<dbReference type="OMA" id="STCCISP"/>
<dbReference type="OrthoDB" id="9874779at2759"/>
<dbReference type="PhylomeDB" id="P21614"/>
<dbReference type="TreeFam" id="TF335561"/>
<dbReference type="Reactome" id="R-MMU-196791">
    <property type="pathway name" value="Vitamin D (calciferol) metabolism"/>
</dbReference>
<dbReference type="BioGRID-ORCS" id="14473">
    <property type="hits" value="1 hit in 79 CRISPR screens"/>
</dbReference>
<dbReference type="ChiTaRS" id="Gc">
    <property type="organism name" value="mouse"/>
</dbReference>
<dbReference type="PRO" id="PR:P21614"/>
<dbReference type="Proteomes" id="UP000000589">
    <property type="component" value="Chromosome 5"/>
</dbReference>
<dbReference type="RNAct" id="P21614">
    <property type="molecule type" value="protein"/>
</dbReference>
<dbReference type="Bgee" id="ENSMUSG00000035540">
    <property type="expression patterns" value="Expressed in left lobe of liver and 68 other cell types or tissues"/>
</dbReference>
<dbReference type="ExpressionAtlas" id="P21614">
    <property type="expression patterns" value="baseline and differential"/>
</dbReference>
<dbReference type="GO" id="GO:0005615">
    <property type="term" value="C:extracellular space"/>
    <property type="evidence" value="ECO:0007669"/>
    <property type="project" value="InterPro"/>
</dbReference>
<dbReference type="GO" id="GO:0003779">
    <property type="term" value="F:actin binding"/>
    <property type="evidence" value="ECO:0000250"/>
    <property type="project" value="UniProtKB"/>
</dbReference>
<dbReference type="GO" id="GO:1902118">
    <property type="term" value="F:calcidiol binding"/>
    <property type="evidence" value="ECO:0007669"/>
    <property type="project" value="Ensembl"/>
</dbReference>
<dbReference type="GO" id="GO:0090482">
    <property type="term" value="F:vitamin transmembrane transporter activity"/>
    <property type="evidence" value="ECO:0007669"/>
    <property type="project" value="InterPro"/>
</dbReference>
<dbReference type="GO" id="GO:0042359">
    <property type="term" value="P:vitamin D metabolic process"/>
    <property type="evidence" value="ECO:0000314"/>
    <property type="project" value="MGI"/>
</dbReference>
<dbReference type="CDD" id="cd00015">
    <property type="entry name" value="ALBUMIN"/>
    <property type="match status" value="1"/>
</dbReference>
<dbReference type="Gene3D" id="1.10.246.10">
    <property type="match status" value="5"/>
</dbReference>
<dbReference type="InterPro" id="IPR000264">
    <property type="entry name" value="ALB/AFP/VDB"/>
</dbReference>
<dbReference type="InterPro" id="IPR020858">
    <property type="entry name" value="Serum_albumin-like"/>
</dbReference>
<dbReference type="InterPro" id="IPR020857">
    <property type="entry name" value="Serum_albumin_CS"/>
</dbReference>
<dbReference type="InterPro" id="IPR014760">
    <property type="entry name" value="Serum_albumin_N"/>
</dbReference>
<dbReference type="InterPro" id="IPR000213">
    <property type="entry name" value="VitD-bd"/>
</dbReference>
<dbReference type="InterPro" id="IPR015247">
    <property type="entry name" value="VitD-bind_III"/>
</dbReference>
<dbReference type="PANTHER" id="PTHR11385">
    <property type="entry name" value="SERUM ALBUMIN-RELATED"/>
    <property type="match status" value="1"/>
</dbReference>
<dbReference type="PANTHER" id="PTHR11385:SF11">
    <property type="entry name" value="VITAMIN D-BINDING PROTEIN"/>
    <property type="match status" value="1"/>
</dbReference>
<dbReference type="Pfam" id="PF00273">
    <property type="entry name" value="Serum_albumin"/>
    <property type="match status" value="2"/>
</dbReference>
<dbReference type="Pfam" id="PF09164">
    <property type="entry name" value="VitD-bind_III"/>
    <property type="match status" value="1"/>
</dbReference>
<dbReference type="PRINTS" id="PR00802">
    <property type="entry name" value="SERUMALBUMIN"/>
</dbReference>
<dbReference type="PRINTS" id="PR00804">
    <property type="entry name" value="VITAMNDBNDNG"/>
</dbReference>
<dbReference type="SMART" id="SM00103">
    <property type="entry name" value="ALBUMIN"/>
    <property type="match status" value="2"/>
</dbReference>
<dbReference type="SUPFAM" id="SSF48552">
    <property type="entry name" value="Serum albumin-like"/>
    <property type="match status" value="3"/>
</dbReference>
<dbReference type="PROSITE" id="PS00212">
    <property type="entry name" value="ALBUMIN_1"/>
    <property type="match status" value="1"/>
</dbReference>
<dbReference type="PROSITE" id="PS51438">
    <property type="entry name" value="ALBUMIN_2"/>
    <property type="match status" value="2"/>
</dbReference>
<reference key="1">
    <citation type="journal article" date="2005" name="Science">
        <title>The transcriptional landscape of the mammalian genome.</title>
        <authorList>
            <person name="Carninci P."/>
            <person name="Kasukawa T."/>
            <person name="Katayama S."/>
            <person name="Gough J."/>
            <person name="Frith M.C."/>
            <person name="Maeda N."/>
            <person name="Oyama R."/>
            <person name="Ravasi T."/>
            <person name="Lenhard B."/>
            <person name="Wells C."/>
            <person name="Kodzius R."/>
            <person name="Shimokawa K."/>
            <person name="Bajic V.B."/>
            <person name="Brenner S.E."/>
            <person name="Batalov S."/>
            <person name="Forrest A.R."/>
            <person name="Zavolan M."/>
            <person name="Davis M.J."/>
            <person name="Wilming L.G."/>
            <person name="Aidinis V."/>
            <person name="Allen J.E."/>
            <person name="Ambesi-Impiombato A."/>
            <person name="Apweiler R."/>
            <person name="Aturaliya R.N."/>
            <person name="Bailey T.L."/>
            <person name="Bansal M."/>
            <person name="Baxter L."/>
            <person name="Beisel K.W."/>
            <person name="Bersano T."/>
            <person name="Bono H."/>
            <person name="Chalk A.M."/>
            <person name="Chiu K.P."/>
            <person name="Choudhary V."/>
            <person name="Christoffels A."/>
            <person name="Clutterbuck D.R."/>
            <person name="Crowe M.L."/>
            <person name="Dalla E."/>
            <person name="Dalrymple B.P."/>
            <person name="de Bono B."/>
            <person name="Della Gatta G."/>
            <person name="di Bernardo D."/>
            <person name="Down T."/>
            <person name="Engstrom P."/>
            <person name="Fagiolini M."/>
            <person name="Faulkner G."/>
            <person name="Fletcher C.F."/>
            <person name="Fukushima T."/>
            <person name="Furuno M."/>
            <person name="Futaki S."/>
            <person name="Gariboldi M."/>
            <person name="Georgii-Hemming P."/>
            <person name="Gingeras T.R."/>
            <person name="Gojobori T."/>
            <person name="Green R.E."/>
            <person name="Gustincich S."/>
            <person name="Harbers M."/>
            <person name="Hayashi Y."/>
            <person name="Hensch T.K."/>
            <person name="Hirokawa N."/>
            <person name="Hill D."/>
            <person name="Huminiecki L."/>
            <person name="Iacono M."/>
            <person name="Ikeo K."/>
            <person name="Iwama A."/>
            <person name="Ishikawa T."/>
            <person name="Jakt M."/>
            <person name="Kanapin A."/>
            <person name="Katoh M."/>
            <person name="Kawasawa Y."/>
            <person name="Kelso J."/>
            <person name="Kitamura H."/>
            <person name="Kitano H."/>
            <person name="Kollias G."/>
            <person name="Krishnan S.P."/>
            <person name="Kruger A."/>
            <person name="Kummerfeld S.K."/>
            <person name="Kurochkin I.V."/>
            <person name="Lareau L.F."/>
            <person name="Lazarevic D."/>
            <person name="Lipovich L."/>
            <person name="Liu J."/>
            <person name="Liuni S."/>
            <person name="McWilliam S."/>
            <person name="Madan Babu M."/>
            <person name="Madera M."/>
            <person name="Marchionni L."/>
            <person name="Matsuda H."/>
            <person name="Matsuzawa S."/>
            <person name="Miki H."/>
            <person name="Mignone F."/>
            <person name="Miyake S."/>
            <person name="Morris K."/>
            <person name="Mottagui-Tabar S."/>
            <person name="Mulder N."/>
            <person name="Nakano N."/>
            <person name="Nakauchi H."/>
            <person name="Ng P."/>
            <person name="Nilsson R."/>
            <person name="Nishiguchi S."/>
            <person name="Nishikawa S."/>
            <person name="Nori F."/>
            <person name="Ohara O."/>
            <person name="Okazaki Y."/>
            <person name="Orlando V."/>
            <person name="Pang K.C."/>
            <person name="Pavan W.J."/>
            <person name="Pavesi G."/>
            <person name="Pesole G."/>
            <person name="Petrovsky N."/>
            <person name="Piazza S."/>
            <person name="Reed J."/>
            <person name="Reid J.F."/>
            <person name="Ring B.Z."/>
            <person name="Ringwald M."/>
            <person name="Rost B."/>
            <person name="Ruan Y."/>
            <person name="Salzberg S.L."/>
            <person name="Sandelin A."/>
            <person name="Schneider C."/>
            <person name="Schoenbach C."/>
            <person name="Sekiguchi K."/>
            <person name="Semple C.A."/>
            <person name="Seno S."/>
            <person name="Sessa L."/>
            <person name="Sheng Y."/>
            <person name="Shibata Y."/>
            <person name="Shimada H."/>
            <person name="Shimada K."/>
            <person name="Silva D."/>
            <person name="Sinclair B."/>
            <person name="Sperling S."/>
            <person name="Stupka E."/>
            <person name="Sugiura K."/>
            <person name="Sultana R."/>
            <person name="Takenaka Y."/>
            <person name="Taki K."/>
            <person name="Tammoja K."/>
            <person name="Tan S.L."/>
            <person name="Tang S."/>
            <person name="Taylor M.S."/>
            <person name="Tegner J."/>
            <person name="Teichmann S.A."/>
            <person name="Ueda H.R."/>
            <person name="van Nimwegen E."/>
            <person name="Verardo R."/>
            <person name="Wei C.L."/>
            <person name="Yagi K."/>
            <person name="Yamanishi H."/>
            <person name="Zabarovsky E."/>
            <person name="Zhu S."/>
            <person name="Zimmer A."/>
            <person name="Hide W."/>
            <person name="Bult C."/>
            <person name="Grimmond S.M."/>
            <person name="Teasdale R.D."/>
            <person name="Liu E.T."/>
            <person name="Brusic V."/>
            <person name="Quackenbush J."/>
            <person name="Wahlestedt C."/>
            <person name="Mattick J.S."/>
            <person name="Hume D.A."/>
            <person name="Kai C."/>
            <person name="Sasaki D."/>
            <person name="Tomaru Y."/>
            <person name="Fukuda S."/>
            <person name="Kanamori-Katayama M."/>
            <person name="Suzuki M."/>
            <person name="Aoki J."/>
            <person name="Arakawa T."/>
            <person name="Iida J."/>
            <person name="Imamura K."/>
            <person name="Itoh M."/>
            <person name="Kato T."/>
            <person name="Kawaji H."/>
            <person name="Kawagashira N."/>
            <person name="Kawashima T."/>
            <person name="Kojima M."/>
            <person name="Kondo S."/>
            <person name="Konno H."/>
            <person name="Nakano K."/>
            <person name="Ninomiya N."/>
            <person name="Nishio T."/>
            <person name="Okada M."/>
            <person name="Plessy C."/>
            <person name="Shibata K."/>
            <person name="Shiraki T."/>
            <person name="Suzuki S."/>
            <person name="Tagami M."/>
            <person name="Waki K."/>
            <person name="Watahiki A."/>
            <person name="Okamura-Oho Y."/>
            <person name="Suzuki H."/>
            <person name="Kawai J."/>
            <person name="Hayashizaki Y."/>
        </authorList>
    </citation>
    <scope>NUCLEOTIDE SEQUENCE [LARGE SCALE MRNA]</scope>
    <source>
        <strain>C57BL/6J</strain>
        <tissue>Embryonic liver</tissue>
    </source>
</reference>
<reference key="2">
    <citation type="journal article" date="2004" name="Genome Res.">
        <title>The status, quality, and expansion of the NIH full-length cDNA project: the Mammalian Gene Collection (MGC).</title>
        <authorList>
            <consortium name="The MGC Project Team"/>
        </authorList>
    </citation>
    <scope>NUCLEOTIDE SEQUENCE [LARGE SCALE MRNA]</scope>
    <source>
        <strain>FVB/N</strain>
        <tissue>Kidney</tissue>
        <tissue>Liver</tissue>
    </source>
</reference>
<reference key="3">
    <citation type="journal article" date="1990" name="Genomics">
        <title>Mapping and conservation of the group-specific component gene in mouse.</title>
        <authorList>
            <person name="Yang F."/>
            <person name="Bergeron J.M."/>
            <person name="Linehan L.A."/>
            <person name="Lalley P.A."/>
            <person name="Sakaguchi A.Y."/>
            <person name="Bowman B.H."/>
        </authorList>
    </citation>
    <scope>NUCLEOTIDE SEQUENCE [MRNA] OF 5-476</scope>
</reference>
<reference key="4">
    <citation type="journal article" date="1999" name="Cell">
        <title>An endocytic pathway essential for renal uptake and activation of the steroid 25-(OH) vitamin D3.</title>
        <authorList>
            <person name="Nykjaer A."/>
            <person name="Dragun D."/>
            <person name="Walther D."/>
            <person name="Vorum H."/>
            <person name="Jacobsen C."/>
            <person name="Herz J."/>
            <person name="Melsen F."/>
            <person name="Christensen E.I."/>
            <person name="Willnow T.E."/>
        </authorList>
    </citation>
    <scope>PROTEIN SEQUENCE OF 17-24</scope>
    <scope>INTERACTION WITH LRP2</scope>
    <scope>SUBCELLULAR LOCATION</scope>
</reference>
<reference key="5">
    <citation type="journal article" date="1988" name="Int. J. Biochem.">
        <title>The isolation, characterization and amino terminal sequence of the vitamin D-binding protein (group specific component) from mouse plasma.</title>
        <authorList>
            <person name="Borke J.L."/>
            <person name="Litwiller R.D."/>
            <person name="Bell M.P."/>
            <person name="Fass D.N."/>
            <person name="McKean D.J."/>
            <person name="Kumar R."/>
        </authorList>
    </citation>
    <scope>PROTEIN SEQUENCE OF 17-38</scope>
</reference>
<reference key="6">
    <citation type="journal article" date="2007" name="J. Proteome Res.">
        <title>Enhanced analysis of the mouse plasma proteome using cysteine-containing tryptic glycopeptides.</title>
        <authorList>
            <person name="Bernhard O.K."/>
            <person name="Kapp E.A."/>
            <person name="Simpson R.J."/>
        </authorList>
    </citation>
    <scope>GLYCOSYLATION [LARGE SCALE ANALYSIS] AT ASN-288</scope>
    <source>
        <strain>C57BL/6J</strain>
        <tissue>Plasma</tissue>
    </source>
</reference>
<reference key="7">
    <citation type="journal article" date="2010" name="Cell">
        <title>A tissue-specific atlas of mouse protein phosphorylation and expression.</title>
        <authorList>
            <person name="Huttlin E.L."/>
            <person name="Jedrychowski M.P."/>
            <person name="Elias J.E."/>
            <person name="Goswami T."/>
            <person name="Rad R."/>
            <person name="Beausoleil S.A."/>
            <person name="Villen J."/>
            <person name="Haas W."/>
            <person name="Sowa M.E."/>
            <person name="Gygi S.P."/>
        </authorList>
    </citation>
    <scope>IDENTIFICATION BY MASS SPECTROMETRY [LARGE SCALE ANALYSIS]</scope>
    <source>
        <tissue>Brown adipose tissue</tissue>
        <tissue>Heart</tissue>
        <tissue>Kidney</tissue>
        <tissue>Liver</tissue>
        <tissue>Lung</tissue>
        <tissue>Pancreas</tissue>
        <tissue>Spleen</tissue>
        <tissue>Testis</tissue>
    </source>
</reference>
<name>VTDB_MOUSE</name>
<organism>
    <name type="scientific">Mus musculus</name>
    <name type="common">Mouse</name>
    <dbReference type="NCBI Taxonomy" id="10090"/>
    <lineage>
        <taxon>Eukaryota</taxon>
        <taxon>Metazoa</taxon>
        <taxon>Chordata</taxon>
        <taxon>Craniata</taxon>
        <taxon>Vertebrata</taxon>
        <taxon>Euteleostomi</taxon>
        <taxon>Mammalia</taxon>
        <taxon>Eutheria</taxon>
        <taxon>Euarchontoglires</taxon>
        <taxon>Glires</taxon>
        <taxon>Rodentia</taxon>
        <taxon>Myomorpha</taxon>
        <taxon>Muroidea</taxon>
        <taxon>Muridae</taxon>
        <taxon>Murinae</taxon>
        <taxon>Mus</taxon>
        <taxon>Mus</taxon>
    </lineage>
</organism>
<proteinExistence type="evidence at protein level"/>
<protein>
    <recommendedName>
        <fullName>Vitamin D-binding protein</fullName>
        <shortName>DBP</shortName>
        <shortName>VDB</shortName>
    </recommendedName>
    <alternativeName>
        <fullName>Gc-globulin</fullName>
    </alternativeName>
    <alternativeName>
        <fullName>Group-specific component</fullName>
    </alternativeName>
</protein>
<gene>
    <name type="primary">Gc</name>
</gene>
<feature type="signal peptide" evidence="4 6">
    <location>
        <begin position="1"/>
        <end position="16"/>
    </location>
</feature>
<feature type="chain" id="PRO_0000001103" description="Vitamin D-binding protein">
    <location>
        <begin position="17"/>
        <end position="476"/>
    </location>
</feature>
<feature type="domain" description="Albumin 1" evidence="3">
    <location>
        <begin position="17"/>
        <end position="208"/>
    </location>
</feature>
<feature type="domain" description="Albumin 2" evidence="3">
    <location>
        <begin position="209"/>
        <end position="394"/>
    </location>
</feature>
<feature type="domain" description="Albumin 3" evidence="3">
    <location>
        <begin position="395"/>
        <end position="476"/>
    </location>
</feature>
<feature type="modified residue" description="Phosphoserine" evidence="2">
    <location>
        <position position="434"/>
    </location>
</feature>
<feature type="glycosylation site" description="N-linked (GlcNAc...) asparagine" evidence="5">
    <location>
        <position position="288"/>
    </location>
</feature>
<feature type="disulfide bond" evidence="3">
    <location>
        <begin position="29"/>
        <end position="75"/>
    </location>
</feature>
<feature type="disulfide bond" evidence="3">
    <location>
        <begin position="74"/>
        <end position="83"/>
    </location>
</feature>
<feature type="disulfide bond" evidence="3">
    <location>
        <begin position="96"/>
        <end position="112"/>
    </location>
</feature>
<feature type="disulfide bond" evidence="3">
    <location>
        <begin position="111"/>
        <end position="122"/>
    </location>
</feature>
<feature type="disulfide bond" evidence="3">
    <location>
        <begin position="145"/>
        <end position="190"/>
    </location>
</feature>
<feature type="disulfide bond" evidence="3">
    <location>
        <begin position="189"/>
        <end position="198"/>
    </location>
</feature>
<feature type="disulfide bond" evidence="3">
    <location>
        <begin position="220"/>
        <end position="266"/>
    </location>
</feature>
<feature type="disulfide bond" evidence="3">
    <location>
        <begin position="265"/>
        <end position="273"/>
    </location>
</feature>
<feature type="disulfide bond" evidence="3">
    <location>
        <begin position="286"/>
        <end position="300"/>
    </location>
</feature>
<feature type="disulfide bond" evidence="3">
    <location>
        <begin position="299"/>
        <end position="311"/>
    </location>
</feature>
<feature type="disulfide bond" evidence="3">
    <location>
        <begin position="335"/>
        <end position="376"/>
    </location>
</feature>
<feature type="disulfide bond" evidence="3">
    <location>
        <begin position="375"/>
        <end position="384"/>
    </location>
</feature>
<feature type="disulfide bond" evidence="3">
    <location>
        <begin position="407"/>
        <end position="453"/>
    </location>
</feature>
<feature type="disulfide bond" evidence="3">
    <location>
        <begin position="452"/>
        <end position="462"/>
    </location>
</feature>
<feature type="sequence conflict" description="In Ref. 1; BAB27297." evidence="7" ref="1">
    <original>N</original>
    <variation>K</variation>
    <location>
        <position position="247"/>
    </location>
</feature>
<comment type="function">
    <text evidence="1">Involved in vitamin D transport and storage, scavenging of extracellular G-actin, enhancement of the chemotactic activity of C5 alpha for neutrophils in inflammation and macrophage activation.</text>
</comment>
<comment type="subunit">
    <text evidence="1 4">Associates with membrane-bound immunoglobulin on the surface of B-lymphocytes and with IgG Fc receptor on the membranes of T-lymphocytes (By similarity). Interacts with LRP2; the interaction is required for renal uptake of GC in complex with 25-hydroxyvitamin D3 (PubMed:10052453).</text>
</comment>
<comment type="subcellular location">
    <subcellularLocation>
        <location evidence="4">Secreted</location>
    </subcellularLocation>
</comment>
<comment type="similarity">
    <text evidence="3">Belongs to the ALB/AFP/VDB family.</text>
</comment>
<sequence>MKRVLVLLLALAFGHALERGRDYEKDKVCNELAMLGKEDFRSLSLILYSRKFSSSTFEQVNQLVKEVVSLTEECCAEGADPTCYDTRTSELSVKSCESDAPFPVHPGTPECCTKEGLERKLCMAALSHQPQEFPTYVEPTNDEICEAFRRDPKGFADQFLYEYSSNYGQAPLPLLVAYTKNYLSMVGSCCTSANPTVCFVKERLQMKHLSLLTTMSNRVCSQYAAYGKEKSRLSHLIKLAQKVPTANLENVLPLAEDFTEILSRCCESTSEDCMASELPEHTIKICQNLSKKNSKFEECCQENTPMNIFMCTYFMPAAEPLQLPAIKLPTGKDLCGQSTTQAMDQYTFELSRRTQVPEVFLSKVLEPTLKTLRECCDTQDSVACFSTQSPLLKRQLTSFIEKGQEMCADYSENTFTEYKKKLAERLRTKTPNTSPAELKDMVEKHSDFASKCCSINSPPLYCSSQIDAEMIDTLQS</sequence>
<keyword id="KW-0009">Actin-binding</keyword>
<keyword id="KW-0903">Direct protein sequencing</keyword>
<keyword id="KW-1015">Disulfide bond</keyword>
<keyword id="KW-0325">Glycoprotein</keyword>
<keyword id="KW-0597">Phosphoprotein</keyword>
<keyword id="KW-1185">Reference proteome</keyword>
<keyword id="KW-0677">Repeat</keyword>
<keyword id="KW-0964">Secreted</keyword>
<keyword id="KW-0732">Signal</keyword>
<keyword id="KW-0813">Transport</keyword>
<keyword id="KW-0848">Vitamin D</keyword>